<proteinExistence type="inferred from homology"/>
<sequence>MSDTDGKKTLGLRGGSRTGQVKQSFSHGRTKNVVVETKRKRVLVPKPGASASGGRGSDPKKPGNATDAEMERRLRALRAAKANESEEAERRAAEEKAREEERARRRAEIEAKEREEQEREERARQKAEEEEEARKKAEADASSKPAAARSKADDPATMDPAAAQAAEARGAGKTGSGPRKERTADRAQPRKEQKGKGDDRRRSGKLTLNQALSGDGGRQKSMAAMKRKQERERRKAMGGSQEREKIVRDVQLPETIVVQELANRMAERVADVVKALMKMGMMVTQNQSIDADTAELIIEEFGHKVVRVSDADVEDVIATVEDDPADMQPRPPVITVMGHVDHGKTSLLDAIRNAKVVAGEAGGITQHIGAYQVTTDDGTKLSFLDTPGHAAFTSMRARGAQVTDIVVLVVAADDAVMPQTIEAINHAKAAKVPMIVAINKIDRPEANPDKVRTDLLQHEVIVEKLSGDVQDVEVSAINGTGLDQLLESIALQAEILELKANPDRAAEGAVIEAQLDVGRGPVATVLVQKGTLRRGDIFVVGEQWGKVRALINDQGERVDEAGPSVPVEVLGLNGTPEAGDVLNVVETEAQAREIAEYRESAAKEKRAAAGAATTLEQLMAKAKSDETVAELPIVVKADVQGSAEAIVQTMEKIGNEEVRVRVLHSGVGAITESDIGLAEASGAPVFGFNVRANAPARNAAQQKGVEIRYYSIIYDLVDDVKAAASGLLSAEVRENFIGYAEIREVFKVSGVGKVAGCLVTDGIARRSAGVRLLRDNVVIHEGTLKTLKRFKDEVKEVQSGQECGMAFENYDDIRPGDVIEIFEREEVERNLE</sequence>
<organism>
    <name type="scientific">Dinoroseobacter shibae (strain DSM 16493 / NCIMB 14021 / DFL 12)</name>
    <dbReference type="NCBI Taxonomy" id="398580"/>
    <lineage>
        <taxon>Bacteria</taxon>
        <taxon>Pseudomonadati</taxon>
        <taxon>Pseudomonadota</taxon>
        <taxon>Alphaproteobacteria</taxon>
        <taxon>Rhodobacterales</taxon>
        <taxon>Roseobacteraceae</taxon>
        <taxon>Dinoroseobacter</taxon>
    </lineage>
</organism>
<reference key="1">
    <citation type="journal article" date="2010" name="ISME J.">
        <title>The complete genome sequence of the algal symbiont Dinoroseobacter shibae: a hitchhiker's guide to life in the sea.</title>
        <authorList>
            <person name="Wagner-Dobler I."/>
            <person name="Ballhausen B."/>
            <person name="Berger M."/>
            <person name="Brinkhoff T."/>
            <person name="Buchholz I."/>
            <person name="Bunk B."/>
            <person name="Cypionka H."/>
            <person name="Daniel R."/>
            <person name="Drepper T."/>
            <person name="Gerdts G."/>
            <person name="Hahnke S."/>
            <person name="Han C."/>
            <person name="Jahn D."/>
            <person name="Kalhoefer D."/>
            <person name="Kiss H."/>
            <person name="Klenk H.P."/>
            <person name="Kyrpides N."/>
            <person name="Liebl W."/>
            <person name="Liesegang H."/>
            <person name="Meincke L."/>
            <person name="Pati A."/>
            <person name="Petersen J."/>
            <person name="Piekarski T."/>
            <person name="Pommerenke C."/>
            <person name="Pradella S."/>
            <person name="Pukall R."/>
            <person name="Rabus R."/>
            <person name="Stackebrandt E."/>
            <person name="Thole S."/>
            <person name="Thompson L."/>
            <person name="Tielen P."/>
            <person name="Tomasch J."/>
            <person name="von Jan M."/>
            <person name="Wanphrut N."/>
            <person name="Wichels A."/>
            <person name="Zech H."/>
            <person name="Simon M."/>
        </authorList>
    </citation>
    <scope>NUCLEOTIDE SEQUENCE [LARGE SCALE GENOMIC DNA]</scope>
    <source>
        <strain>DSM 16493 / NCIMB 14021 / DFL 12</strain>
    </source>
</reference>
<dbReference type="EMBL" id="CP000830">
    <property type="protein sequence ID" value="ABV95296.1"/>
    <property type="molecule type" value="Genomic_DNA"/>
</dbReference>
<dbReference type="RefSeq" id="WP_012180219.1">
    <property type="nucleotide sequence ID" value="NC_009952.1"/>
</dbReference>
<dbReference type="SMR" id="A8LQ56"/>
<dbReference type="STRING" id="398580.Dshi_3563"/>
<dbReference type="KEGG" id="dsh:Dshi_3563"/>
<dbReference type="eggNOG" id="COG0532">
    <property type="taxonomic scope" value="Bacteria"/>
</dbReference>
<dbReference type="HOGENOM" id="CLU_006301_10_1_5"/>
<dbReference type="OrthoDB" id="9811804at2"/>
<dbReference type="Proteomes" id="UP000006833">
    <property type="component" value="Chromosome"/>
</dbReference>
<dbReference type="GO" id="GO:0005829">
    <property type="term" value="C:cytosol"/>
    <property type="evidence" value="ECO:0007669"/>
    <property type="project" value="TreeGrafter"/>
</dbReference>
<dbReference type="GO" id="GO:0005525">
    <property type="term" value="F:GTP binding"/>
    <property type="evidence" value="ECO:0007669"/>
    <property type="project" value="UniProtKB-KW"/>
</dbReference>
<dbReference type="GO" id="GO:0003924">
    <property type="term" value="F:GTPase activity"/>
    <property type="evidence" value="ECO:0007669"/>
    <property type="project" value="UniProtKB-UniRule"/>
</dbReference>
<dbReference type="GO" id="GO:0003743">
    <property type="term" value="F:translation initiation factor activity"/>
    <property type="evidence" value="ECO:0007669"/>
    <property type="project" value="UniProtKB-UniRule"/>
</dbReference>
<dbReference type="CDD" id="cd01887">
    <property type="entry name" value="IF2_eIF5B"/>
    <property type="match status" value="1"/>
</dbReference>
<dbReference type="CDD" id="cd03702">
    <property type="entry name" value="IF2_mtIF2_II"/>
    <property type="match status" value="1"/>
</dbReference>
<dbReference type="CDD" id="cd03692">
    <property type="entry name" value="mtIF2_IVc"/>
    <property type="match status" value="1"/>
</dbReference>
<dbReference type="FunFam" id="2.40.30.10:FF:000007">
    <property type="entry name" value="Translation initiation factor IF-2"/>
    <property type="match status" value="1"/>
</dbReference>
<dbReference type="FunFam" id="2.40.30.10:FF:000008">
    <property type="entry name" value="Translation initiation factor IF-2"/>
    <property type="match status" value="1"/>
</dbReference>
<dbReference type="FunFam" id="3.40.50.10050:FF:000001">
    <property type="entry name" value="Translation initiation factor IF-2"/>
    <property type="match status" value="1"/>
</dbReference>
<dbReference type="FunFam" id="3.40.50.300:FF:000019">
    <property type="entry name" value="Translation initiation factor IF-2"/>
    <property type="match status" value="1"/>
</dbReference>
<dbReference type="Gene3D" id="3.40.50.300">
    <property type="entry name" value="P-loop containing nucleotide triphosphate hydrolases"/>
    <property type="match status" value="1"/>
</dbReference>
<dbReference type="Gene3D" id="2.40.30.10">
    <property type="entry name" value="Translation factors"/>
    <property type="match status" value="2"/>
</dbReference>
<dbReference type="Gene3D" id="3.40.50.10050">
    <property type="entry name" value="Translation initiation factor IF- 2, domain 3"/>
    <property type="match status" value="1"/>
</dbReference>
<dbReference type="HAMAP" id="MF_00100_B">
    <property type="entry name" value="IF_2_B"/>
    <property type="match status" value="1"/>
</dbReference>
<dbReference type="InterPro" id="IPR053905">
    <property type="entry name" value="EF-G-like_DII"/>
</dbReference>
<dbReference type="InterPro" id="IPR013575">
    <property type="entry name" value="IF2_assoc_dom_bac"/>
</dbReference>
<dbReference type="InterPro" id="IPR044145">
    <property type="entry name" value="IF2_II"/>
</dbReference>
<dbReference type="InterPro" id="IPR006847">
    <property type="entry name" value="IF2_N"/>
</dbReference>
<dbReference type="InterPro" id="IPR027417">
    <property type="entry name" value="P-loop_NTPase"/>
</dbReference>
<dbReference type="InterPro" id="IPR005225">
    <property type="entry name" value="Small_GTP-bd"/>
</dbReference>
<dbReference type="InterPro" id="IPR000795">
    <property type="entry name" value="T_Tr_GTP-bd_dom"/>
</dbReference>
<dbReference type="InterPro" id="IPR000178">
    <property type="entry name" value="TF_IF2_bacterial-like"/>
</dbReference>
<dbReference type="InterPro" id="IPR015760">
    <property type="entry name" value="TIF_IF2"/>
</dbReference>
<dbReference type="InterPro" id="IPR023115">
    <property type="entry name" value="TIF_IF2_dom3"/>
</dbReference>
<dbReference type="InterPro" id="IPR036925">
    <property type="entry name" value="TIF_IF2_dom3_sf"/>
</dbReference>
<dbReference type="InterPro" id="IPR009000">
    <property type="entry name" value="Transl_B-barrel_sf"/>
</dbReference>
<dbReference type="NCBIfam" id="TIGR00487">
    <property type="entry name" value="IF-2"/>
    <property type="match status" value="1"/>
</dbReference>
<dbReference type="NCBIfam" id="TIGR00231">
    <property type="entry name" value="small_GTP"/>
    <property type="match status" value="1"/>
</dbReference>
<dbReference type="PANTHER" id="PTHR43381:SF5">
    <property type="entry name" value="TR-TYPE G DOMAIN-CONTAINING PROTEIN"/>
    <property type="match status" value="1"/>
</dbReference>
<dbReference type="PANTHER" id="PTHR43381">
    <property type="entry name" value="TRANSLATION INITIATION FACTOR IF-2-RELATED"/>
    <property type="match status" value="1"/>
</dbReference>
<dbReference type="Pfam" id="PF22042">
    <property type="entry name" value="EF-G_D2"/>
    <property type="match status" value="1"/>
</dbReference>
<dbReference type="Pfam" id="PF00009">
    <property type="entry name" value="GTP_EFTU"/>
    <property type="match status" value="1"/>
</dbReference>
<dbReference type="Pfam" id="PF11987">
    <property type="entry name" value="IF-2"/>
    <property type="match status" value="1"/>
</dbReference>
<dbReference type="Pfam" id="PF08364">
    <property type="entry name" value="IF2_assoc"/>
    <property type="match status" value="1"/>
</dbReference>
<dbReference type="Pfam" id="PF04760">
    <property type="entry name" value="IF2_N"/>
    <property type="match status" value="1"/>
</dbReference>
<dbReference type="SUPFAM" id="SSF52156">
    <property type="entry name" value="Initiation factor IF2/eIF5b, domain 3"/>
    <property type="match status" value="1"/>
</dbReference>
<dbReference type="SUPFAM" id="SSF52540">
    <property type="entry name" value="P-loop containing nucleoside triphosphate hydrolases"/>
    <property type="match status" value="1"/>
</dbReference>
<dbReference type="SUPFAM" id="SSF50447">
    <property type="entry name" value="Translation proteins"/>
    <property type="match status" value="2"/>
</dbReference>
<dbReference type="PROSITE" id="PS51722">
    <property type="entry name" value="G_TR_2"/>
    <property type="match status" value="1"/>
</dbReference>
<dbReference type="PROSITE" id="PS01176">
    <property type="entry name" value="IF2"/>
    <property type="match status" value="1"/>
</dbReference>
<evidence type="ECO:0000250" key="1"/>
<evidence type="ECO:0000255" key="2">
    <source>
        <dbReference type="HAMAP-Rule" id="MF_00100"/>
    </source>
</evidence>
<evidence type="ECO:0000256" key="3">
    <source>
        <dbReference type="SAM" id="MobiDB-lite"/>
    </source>
</evidence>
<comment type="function">
    <text evidence="2">One of the essential components for the initiation of protein synthesis. Protects formylmethionyl-tRNA from spontaneous hydrolysis and promotes its binding to the 30S ribosomal subunits. Also involved in the hydrolysis of GTP during the formation of the 70S ribosomal complex.</text>
</comment>
<comment type="subcellular location">
    <subcellularLocation>
        <location evidence="2">Cytoplasm</location>
    </subcellularLocation>
</comment>
<comment type="similarity">
    <text evidence="2">Belongs to the TRAFAC class translation factor GTPase superfamily. Classic translation factor GTPase family. IF-2 subfamily.</text>
</comment>
<name>IF2_DINSH</name>
<accession>A8LQ56</accession>
<keyword id="KW-0963">Cytoplasm</keyword>
<keyword id="KW-0342">GTP-binding</keyword>
<keyword id="KW-0396">Initiation factor</keyword>
<keyword id="KW-0547">Nucleotide-binding</keyword>
<keyword id="KW-0648">Protein biosynthesis</keyword>
<keyword id="KW-1185">Reference proteome</keyword>
<gene>
    <name evidence="2" type="primary">infB</name>
    <name type="ordered locus">Dshi_3563</name>
</gene>
<feature type="chain" id="PRO_1000075604" description="Translation initiation factor IF-2">
    <location>
        <begin position="1"/>
        <end position="832"/>
    </location>
</feature>
<feature type="domain" description="tr-type G">
    <location>
        <begin position="329"/>
        <end position="497"/>
    </location>
</feature>
<feature type="region of interest" description="Disordered" evidence="3">
    <location>
        <begin position="1"/>
        <end position="244"/>
    </location>
</feature>
<feature type="region of interest" description="G1" evidence="1">
    <location>
        <begin position="338"/>
        <end position="345"/>
    </location>
</feature>
<feature type="region of interest" description="G2" evidence="1">
    <location>
        <begin position="363"/>
        <end position="367"/>
    </location>
</feature>
<feature type="region of interest" description="G3" evidence="1">
    <location>
        <begin position="385"/>
        <end position="388"/>
    </location>
</feature>
<feature type="region of interest" description="G4" evidence="1">
    <location>
        <begin position="439"/>
        <end position="442"/>
    </location>
</feature>
<feature type="region of interest" description="G5" evidence="1">
    <location>
        <begin position="475"/>
        <end position="477"/>
    </location>
</feature>
<feature type="compositionally biased region" description="Polar residues" evidence="3">
    <location>
        <begin position="18"/>
        <end position="27"/>
    </location>
</feature>
<feature type="compositionally biased region" description="Basic and acidic residues" evidence="3">
    <location>
        <begin position="81"/>
        <end position="141"/>
    </location>
</feature>
<feature type="compositionally biased region" description="Low complexity" evidence="3">
    <location>
        <begin position="142"/>
        <end position="171"/>
    </location>
</feature>
<feature type="compositionally biased region" description="Basic and acidic residues" evidence="3">
    <location>
        <begin position="178"/>
        <end position="201"/>
    </location>
</feature>
<feature type="compositionally biased region" description="Basic and acidic residues" evidence="3">
    <location>
        <begin position="227"/>
        <end position="244"/>
    </location>
</feature>
<feature type="binding site" evidence="2">
    <location>
        <begin position="338"/>
        <end position="345"/>
    </location>
    <ligand>
        <name>GTP</name>
        <dbReference type="ChEBI" id="CHEBI:37565"/>
    </ligand>
</feature>
<feature type="binding site" evidence="2">
    <location>
        <begin position="385"/>
        <end position="389"/>
    </location>
    <ligand>
        <name>GTP</name>
        <dbReference type="ChEBI" id="CHEBI:37565"/>
    </ligand>
</feature>
<feature type="binding site" evidence="2">
    <location>
        <begin position="439"/>
        <end position="442"/>
    </location>
    <ligand>
        <name>GTP</name>
        <dbReference type="ChEBI" id="CHEBI:37565"/>
    </ligand>
</feature>
<protein>
    <recommendedName>
        <fullName evidence="2">Translation initiation factor IF-2</fullName>
    </recommendedName>
</protein>